<comment type="function">
    <text evidence="3">Condenses choline with CDP-diglyceride to produce phosphatidylcholine and CMP.</text>
</comment>
<comment type="catalytic activity">
    <reaction evidence="3">
        <text>a CDP-1,2-diacyl-sn-glycerol + choline = a 1,2-diacyl-sn-glycero-3-phosphocholine + CMP + H(+)</text>
        <dbReference type="Rhea" id="RHEA:14597"/>
        <dbReference type="ChEBI" id="CHEBI:15354"/>
        <dbReference type="ChEBI" id="CHEBI:15378"/>
        <dbReference type="ChEBI" id="CHEBI:57643"/>
        <dbReference type="ChEBI" id="CHEBI:58332"/>
        <dbReference type="ChEBI" id="CHEBI:60377"/>
        <dbReference type="EC" id="2.7.8.24"/>
    </reaction>
</comment>
<comment type="cofactor">
    <cofactor evidence="1">
        <name>Mn(2+)</name>
        <dbReference type="ChEBI" id="CHEBI:29035"/>
    </cofactor>
</comment>
<comment type="subcellular location">
    <subcellularLocation>
        <location evidence="1">Cell inner membrane</location>
        <topology evidence="1">Multi-pass membrane protein</topology>
    </subcellularLocation>
</comment>
<comment type="similarity">
    <text evidence="2">Belongs to the CDP-alcohol phosphatidyltransferase class-I family.</text>
</comment>
<comment type="sequence caution" evidence="5">
    <conflict type="erroneous initiation">
        <sequence resource="EMBL-CDS" id="AAL53937"/>
    </conflict>
    <text>Truncated N-terminus.</text>
</comment>
<feature type="chain" id="PRO_0000425219" description="Phosphatidylcholine synthase">
    <location>
        <begin position="1"/>
        <end position="276"/>
    </location>
</feature>
<feature type="topological domain" description="Cytoplasmic" evidence="1 2">
    <location>
        <begin position="1"/>
        <end position="30"/>
    </location>
</feature>
<feature type="transmembrane region" description="Helical; Name=1" evidence="2">
    <location>
        <begin position="31"/>
        <end position="51"/>
    </location>
</feature>
<feature type="topological domain" description="Periplasmic" evidence="2">
    <location>
        <begin position="52"/>
        <end position="57"/>
    </location>
</feature>
<feature type="transmembrane region" description="Helical; Name=2" evidence="2">
    <location>
        <begin position="58"/>
        <end position="78"/>
    </location>
</feature>
<feature type="topological domain" description="Cytoplasmic" evidence="2">
    <location>
        <begin position="79"/>
        <end position="91"/>
    </location>
</feature>
<feature type="transmembrane region" description="Helical; Name=3" evidence="2">
    <location>
        <begin position="92"/>
        <end position="112"/>
    </location>
</feature>
<feature type="topological domain" description="Periplasmic" evidence="2">
    <location>
        <begin position="113"/>
        <end position="115"/>
    </location>
</feature>
<feature type="transmembrane region" description="Helical; Name=4" evidence="2">
    <location>
        <begin position="116"/>
        <end position="136"/>
    </location>
</feature>
<feature type="topological domain" description="Cytoplasmic" evidence="2">
    <location>
        <begin position="137"/>
        <end position="146"/>
    </location>
</feature>
<feature type="transmembrane region" description="Helical; Name=5" evidence="2">
    <location>
        <begin position="147"/>
        <end position="167"/>
    </location>
</feature>
<feature type="topological domain" description="Periplasmic" evidence="2">
    <location>
        <begin position="168"/>
        <end position="171"/>
    </location>
</feature>
<feature type="transmembrane region" description="Helical; Name=6" evidence="2">
    <location>
        <begin position="172"/>
        <end position="192"/>
    </location>
</feature>
<feature type="topological domain" description="Cytoplasmic" evidence="2">
    <location>
        <begin position="193"/>
        <end position="202"/>
    </location>
</feature>
<feature type="transmembrane region" description="Helical; Name=7" evidence="2">
    <location>
        <begin position="203"/>
        <end position="223"/>
    </location>
</feature>
<feature type="topological domain" description="Periplasmic" evidence="2">
    <location>
        <begin position="224"/>
        <end position="230"/>
    </location>
</feature>
<feature type="transmembrane region" description="Helical; Name=8" evidence="2">
    <location>
        <begin position="231"/>
        <end position="251"/>
    </location>
</feature>
<feature type="topological domain" description="Cytoplasmic" evidence="1 2">
    <location>
        <begin position="252"/>
        <end position="276"/>
    </location>
</feature>
<evidence type="ECO:0000250" key="1">
    <source>
        <dbReference type="UniProtKB" id="Q9KJY8"/>
    </source>
</evidence>
<evidence type="ECO:0000255" key="2"/>
<evidence type="ECO:0000269" key="3">
    <source>
    </source>
</evidence>
<evidence type="ECO:0000303" key="4">
    <source>
    </source>
</evidence>
<evidence type="ECO:0000305" key="5"/>
<evidence type="ECO:0000312" key="6">
    <source>
        <dbReference type="EMBL" id="AAL53937.1"/>
    </source>
</evidence>
<evidence type="ECO:0000312" key="7">
    <source>
        <dbReference type="EMBL" id="EEW87399.1"/>
    </source>
</evidence>
<name>PCS_BRUME</name>
<dbReference type="EC" id="2.7.8.24" evidence="3 6"/>
<dbReference type="EMBL" id="AE008918">
    <property type="protein sequence ID" value="AAL53937.1"/>
    <property type="status" value="ALT_INIT"/>
    <property type="molecule type" value="Genomic_DNA"/>
</dbReference>
<dbReference type="EMBL" id="GG703779">
    <property type="protein sequence ID" value="EEW87399.1"/>
    <property type="molecule type" value="Genomic_DNA"/>
</dbReference>
<dbReference type="PIR" id="AF3596">
    <property type="entry name" value="AF3596"/>
</dbReference>
<dbReference type="SMR" id="D0B707"/>
<dbReference type="KEGG" id="bme:BMEII0695"/>
<dbReference type="eggNOG" id="COG1183">
    <property type="taxonomic scope" value="Bacteria"/>
</dbReference>
<dbReference type="PhylomeDB" id="D0B707"/>
<dbReference type="BRENDA" id="2.7.8.24">
    <property type="organism ID" value="995"/>
</dbReference>
<dbReference type="Proteomes" id="UP000000419">
    <property type="component" value="Chromosome II"/>
</dbReference>
<dbReference type="GO" id="GO:0005886">
    <property type="term" value="C:plasma membrane"/>
    <property type="evidence" value="ECO:0007669"/>
    <property type="project" value="UniProtKB-SubCell"/>
</dbReference>
<dbReference type="GO" id="GO:0050520">
    <property type="term" value="F:phosphatidylcholine synthase activity"/>
    <property type="evidence" value="ECO:0000314"/>
    <property type="project" value="UniProtKB"/>
</dbReference>
<dbReference type="GO" id="GO:0008654">
    <property type="term" value="P:phospholipid biosynthetic process"/>
    <property type="evidence" value="ECO:0000314"/>
    <property type="project" value="UniProtKB"/>
</dbReference>
<dbReference type="FunFam" id="1.20.120.1760:FF:000009">
    <property type="entry name" value="Phosphatidylcholine synthase"/>
    <property type="match status" value="1"/>
</dbReference>
<dbReference type="Gene3D" id="1.20.120.1760">
    <property type="match status" value="1"/>
</dbReference>
<dbReference type="InterPro" id="IPR000462">
    <property type="entry name" value="CDP-OH_P_trans"/>
</dbReference>
<dbReference type="InterPro" id="IPR043130">
    <property type="entry name" value="CDP-OH_PTrfase_TM_dom"/>
</dbReference>
<dbReference type="InterPro" id="IPR026027">
    <property type="entry name" value="PcS"/>
</dbReference>
<dbReference type="NCBIfam" id="NF045884">
    <property type="entry name" value="PhCholSynAgro"/>
    <property type="match status" value="1"/>
</dbReference>
<dbReference type="Pfam" id="PF01066">
    <property type="entry name" value="CDP-OH_P_transf"/>
    <property type="match status" value="1"/>
</dbReference>
<dbReference type="PIRSF" id="PIRSF000851">
    <property type="entry name" value="PcS"/>
    <property type="match status" value="1"/>
</dbReference>
<protein>
    <recommendedName>
        <fullName evidence="4 6">Phosphatidylcholine synthase</fullName>
        <shortName evidence="1">PC synthase</shortName>
        <shortName evidence="4">PCS</shortName>
        <ecNumber evidence="3 6">2.7.8.24</ecNumber>
    </recommendedName>
    <alternativeName>
        <fullName evidence="1 7">CDP-diglyceride-choline O-phosphatidyltransferase</fullName>
    </alternativeName>
</protein>
<keyword id="KW-0997">Cell inner membrane</keyword>
<keyword id="KW-1003">Cell membrane</keyword>
<keyword id="KW-0444">Lipid biosynthesis</keyword>
<keyword id="KW-0443">Lipid metabolism</keyword>
<keyword id="KW-0464">Manganese</keyword>
<keyword id="KW-0472">Membrane</keyword>
<keyword id="KW-0594">Phospholipid biosynthesis</keyword>
<keyword id="KW-1208">Phospholipid metabolism</keyword>
<keyword id="KW-0808">Transferase</keyword>
<keyword id="KW-0812">Transmembrane</keyword>
<keyword id="KW-1133">Transmembrane helix</keyword>
<gene>
    <name evidence="1" type="primary">pcs</name>
    <name type="ordered locus">BMEII0695</name>
    <name type="ORF">BAWG_1878</name>
</gene>
<organism>
    <name type="scientific">Brucella melitensis biotype 1 (strain ATCC 23456 / CCUG 17765 / NCTC 10094 / 16M)</name>
    <dbReference type="NCBI Taxonomy" id="224914"/>
    <lineage>
        <taxon>Bacteria</taxon>
        <taxon>Pseudomonadati</taxon>
        <taxon>Pseudomonadota</taxon>
        <taxon>Alphaproteobacteria</taxon>
        <taxon>Hyphomicrobiales</taxon>
        <taxon>Brucellaceae</taxon>
        <taxon>Brucella/Ochrobactrum group</taxon>
        <taxon>Brucella</taxon>
    </lineage>
</organism>
<sequence>MGGQKEMADSVKTKLTGKLKAKKVTAPQAKAFSVHLLTASGSFLAFLSVVAASDGRYTAMWWWLGLALFVDGIDGPIARKLEVKYVLPNWSGELLDSIIDYVTYVLIPAFALYQSGFMGTNLSFISGAIIVVSSAIYYADTGMKTKENFFKGFPVVWNMVVFTLFIVRPGEWVAFGTVVASAILSFLPINFLHPVRVVRLRPLNLTIFLLWCAFGVIALYYMLDAPLWVRIGISVTGLYIYFIGAIMQLFPSLGREAALAKARKLVEKQQKSGEAP</sequence>
<accession>D0B707</accession>
<accession>Q8YC37</accession>
<reference key="1">
    <citation type="journal article" date="2002" name="Proc. Natl. Acad. Sci. U.S.A.">
        <title>The genome sequence of the facultative intracellular pathogen Brucella melitensis.</title>
        <authorList>
            <person name="DelVecchio V.G."/>
            <person name="Kapatral V."/>
            <person name="Redkar R.J."/>
            <person name="Patra G."/>
            <person name="Mujer C."/>
            <person name="Los T."/>
            <person name="Ivanova N."/>
            <person name="Anderson I."/>
            <person name="Bhattacharyya A."/>
            <person name="Lykidis A."/>
            <person name="Reznik G."/>
            <person name="Jablonski L."/>
            <person name="Larsen N."/>
            <person name="D'Souza M."/>
            <person name="Bernal A."/>
            <person name="Mazur M."/>
            <person name="Goltsman E."/>
            <person name="Selkov E."/>
            <person name="Elzer P.H."/>
            <person name="Hagius S."/>
            <person name="O'Callaghan D."/>
            <person name="Letesson J.-J."/>
            <person name="Haselkorn R."/>
            <person name="Kyrpides N.C."/>
            <person name="Overbeek R."/>
        </authorList>
    </citation>
    <scope>NUCLEOTIDE SEQUENCE [LARGE SCALE GENOMIC DNA]</scope>
    <source>
        <strain>ATCC 23456 / CCUG 17765 / NCTC 10094 / 16M</strain>
    </source>
</reference>
<reference evidence="7" key="2">
    <citation type="submission" date="2009-06" db="EMBL/GenBank/DDBJ databases">
        <title>The genome sequence of Brucella melitensis bv. 1 str. 16M.</title>
        <authorList>
            <consortium name="The Broad Institute Genome Sequencing Platform"/>
            <person name="Ward D."/>
            <person name="Young S.K."/>
            <person name="Kodira C.D."/>
            <person name="Zeng Q."/>
            <person name="Koehrsen M."/>
            <person name="Alvarado L."/>
            <person name="Berlin A."/>
            <person name="Borenstein D."/>
            <person name="Chen Z."/>
            <person name="Engels R."/>
            <person name="Freedman E."/>
            <person name="Gellesch M."/>
            <person name="Goldberg J."/>
            <person name="Griggs A."/>
            <person name="Gujja S."/>
            <person name="Heiman D."/>
            <person name="Hepburn T."/>
            <person name="Howarth C."/>
            <person name="Jen D."/>
            <person name="Larson L."/>
            <person name="Lewis B."/>
            <person name="Mehta T."/>
            <person name="Park D."/>
            <person name="Pearson M."/>
            <person name="Roberts A."/>
            <person name="Saif S."/>
            <person name="Shea T."/>
            <person name="Shenoy N."/>
            <person name="Sisk P."/>
            <person name="Stolte C."/>
            <person name="Sykes S."/>
            <person name="Walk T."/>
            <person name="White J."/>
            <person name="Yandava C."/>
            <person name="Whatmore A.M."/>
            <person name="Perrett L.L."/>
            <person name="O'Callaghan D."/>
            <person name="Nusbaum C."/>
            <person name="Galagan J."/>
            <person name="Birren B."/>
        </authorList>
    </citation>
    <scope>NUCLEOTIDE SEQUENCE [LARGE SCALE GENOMIC DNA]</scope>
    <source>
        <strain evidence="7">ATCC 23456 / CCUG 17765 / NCTC 10094 / 16M</strain>
    </source>
</reference>
<reference evidence="5" key="3">
    <citation type="journal article" date="2003" name="Microbiology">
        <title>Pathways for phosphatidylcholine biosynthesis in bacteria.</title>
        <authorList>
            <person name="Martinez-Morales F."/>
            <person name="Schobert M."/>
            <person name="Lopez-Lara I.M."/>
            <person name="Geiger O."/>
        </authorList>
    </citation>
    <scope>FUNCTION</scope>
    <scope>CATALYTIC ACTIVITY</scope>
    <source>
        <strain evidence="3">ATCC 23456 / CCUG 17765 / NCTC 10094 / 16M</strain>
    </source>
</reference>
<proteinExistence type="evidence at protein level"/>